<comment type="function">
    <text evidence="1">Catalyzes cyanide-resistant oxygen consumption. May increase respiration when the cytochrome respiratory pathway is restricted, or in response to low temperatures (By similarity).</text>
</comment>
<comment type="cofactor">
    <cofactor evidence="2">
        <name>Fe cation</name>
        <dbReference type="ChEBI" id="CHEBI:24875"/>
    </cofactor>
    <text evidence="2">Binds 2 iron ions per subunit.</text>
</comment>
<comment type="subcellular location">
    <subcellularLocation>
        <location evidence="1">Mitochondrion inner membrane</location>
        <topology evidence="1">Multi-pass membrane protein</topology>
        <orientation evidence="1">Matrix side</orientation>
    </subcellularLocation>
</comment>
<comment type="similarity">
    <text evidence="4">Belongs to the alternative oxidase family.</text>
</comment>
<accession>Q96UR9</accession>
<protein>
    <recommendedName>
        <fullName>Alternative oxidase, mitochondrial</fullName>
        <ecNumber>1.-.-.-</ecNumber>
    </recommendedName>
    <alternativeName>
        <fullName>MfAOX1</fullName>
    </alternativeName>
</protein>
<feature type="transit peptide" description="Mitochondrion" evidence="3">
    <location>
        <begin position="1"/>
        <end status="unknown"/>
    </location>
</feature>
<feature type="chain" id="PRO_0000001724" description="Alternative oxidase, mitochondrial">
    <location>
        <begin status="unknown"/>
        <end position="358"/>
    </location>
</feature>
<feature type="transmembrane region" description="Helical" evidence="3">
    <location>
        <begin position="152"/>
        <end position="172"/>
    </location>
</feature>
<feature type="transmembrane region" description="Helical" evidence="3">
    <location>
        <begin position="218"/>
        <end position="238"/>
    </location>
</feature>
<feature type="binding site" evidence="2">
    <location>
        <position position="159"/>
    </location>
    <ligand>
        <name>Fe cation</name>
        <dbReference type="ChEBI" id="CHEBI:24875"/>
        <label>1</label>
    </ligand>
</feature>
<feature type="binding site" evidence="2">
    <location>
        <position position="198"/>
    </location>
    <ligand>
        <name>Fe cation</name>
        <dbReference type="ChEBI" id="CHEBI:24875"/>
        <label>1</label>
    </ligand>
</feature>
<feature type="binding site" evidence="2">
    <location>
        <position position="198"/>
    </location>
    <ligand>
        <name>Fe cation</name>
        <dbReference type="ChEBI" id="CHEBI:24875"/>
        <label>2</label>
    </ligand>
</feature>
<feature type="binding site" evidence="2">
    <location>
        <position position="201"/>
    </location>
    <ligand>
        <name>Fe cation</name>
        <dbReference type="ChEBI" id="CHEBI:24875"/>
        <label>1</label>
    </ligand>
</feature>
<feature type="binding site" evidence="2">
    <location>
        <position position="249"/>
    </location>
    <ligand>
        <name>Fe cation</name>
        <dbReference type="ChEBI" id="CHEBI:24875"/>
        <label>2</label>
    </ligand>
</feature>
<feature type="binding site" evidence="2">
    <location>
        <position position="306"/>
    </location>
    <ligand>
        <name>Fe cation</name>
        <dbReference type="ChEBI" id="CHEBI:24875"/>
        <label>1</label>
    </ligand>
</feature>
<feature type="binding site" evidence="2">
    <location>
        <position position="306"/>
    </location>
    <ligand>
        <name>Fe cation</name>
        <dbReference type="ChEBI" id="CHEBI:24875"/>
        <label>2</label>
    </ligand>
</feature>
<feature type="binding site" evidence="2">
    <location>
        <position position="309"/>
    </location>
    <ligand>
        <name>Fe cation</name>
        <dbReference type="ChEBI" id="CHEBI:24875"/>
        <label>2</label>
    </ligand>
</feature>
<gene>
    <name type="primary">AOX1</name>
</gene>
<proteinExistence type="inferred from homology"/>
<evidence type="ECO:0000250" key="1"/>
<evidence type="ECO:0000250" key="2">
    <source>
        <dbReference type="UniProtKB" id="Q26710"/>
    </source>
</evidence>
<evidence type="ECO:0000255" key="3"/>
<evidence type="ECO:0000305" key="4"/>
<sequence length="358" mass="41098">MYVARLSTRPLSNPSTAQLSKAAAFFAQSYALPSTKCTAHVPSRRPFTSGAKIQVKGRDLFPEPXHGQIKRTEPAWPHPPYSVEQMRSKVYFAHRKPRDFSDRVALGMVRFLRWCTDFATGYKHNVEAPKTASDSNAVTATKPYQMSERKWLIRYVFLESVAGVPGMVAGMLRHLRSLRGLKRDNGWIETLLEEAYNERMHLLTFLKMYEPGLFMRTMILGAQGVFFNSFFLCYLFSPKTCHRFVGYLEEEAVLTYTLSIQDLENGHLPKWADPNFKAPDLAIEYWGMPEGHRSMRDLLYYIRADEAKHREVNHTLGNLKQDEDPNPFVSVYGKEVADKPGKGIESLRPLGWEREEVI</sequence>
<organism>
    <name type="scientific">Monilinia fructicola</name>
    <name type="common">Brown rot fungus</name>
    <name type="synonym">Ciboria fructicola</name>
    <dbReference type="NCBI Taxonomy" id="38448"/>
    <lineage>
        <taxon>Eukaryota</taxon>
        <taxon>Fungi</taxon>
        <taxon>Dikarya</taxon>
        <taxon>Ascomycota</taxon>
        <taxon>Pezizomycotina</taxon>
        <taxon>Leotiomycetes</taxon>
        <taxon>Helotiales</taxon>
        <taxon>Sclerotiniaceae</taxon>
        <taxon>Monilinia</taxon>
    </lineage>
</organism>
<name>AOX_MONFR</name>
<reference key="1">
    <citation type="journal article" date="2003" name="Pest Manag. Sci.">
        <title>Cloning and expression analysis of the ATP-binding cassette transporter MFABC1 gene and the alternative oxidase gene MfAOX1 from Monilinia fructicola.</title>
        <authorList>
            <person name="Schnabel G."/>
            <person name="Dai Q."/>
            <person name="Paradkar M.R."/>
        </authorList>
    </citation>
    <scope>NUCLEOTIDE SEQUENCE [GENOMIC DNA]</scope>
</reference>
<dbReference type="EC" id="1.-.-.-"/>
<dbReference type="EMBL" id="AF420306">
    <property type="protein sequence ID" value="AAL24516.1"/>
    <property type="molecule type" value="Genomic_DNA"/>
</dbReference>
<dbReference type="VEuPathDB" id="FungiDB:MFRU_005g03830"/>
<dbReference type="GO" id="GO:0005743">
    <property type="term" value="C:mitochondrial inner membrane"/>
    <property type="evidence" value="ECO:0007669"/>
    <property type="project" value="UniProtKB-SubCell"/>
</dbReference>
<dbReference type="GO" id="GO:0009916">
    <property type="term" value="F:alternative oxidase activity"/>
    <property type="evidence" value="ECO:0007669"/>
    <property type="project" value="InterPro"/>
</dbReference>
<dbReference type="GO" id="GO:0046872">
    <property type="term" value="F:metal ion binding"/>
    <property type="evidence" value="ECO:0007669"/>
    <property type="project" value="UniProtKB-KW"/>
</dbReference>
<dbReference type="GO" id="GO:0010230">
    <property type="term" value="P:alternative respiration"/>
    <property type="evidence" value="ECO:0007669"/>
    <property type="project" value="TreeGrafter"/>
</dbReference>
<dbReference type="CDD" id="cd01053">
    <property type="entry name" value="AOX"/>
    <property type="match status" value="1"/>
</dbReference>
<dbReference type="FunFam" id="1.20.1260.140:FF:000002">
    <property type="entry name" value="Alternative oxidase"/>
    <property type="match status" value="1"/>
</dbReference>
<dbReference type="Gene3D" id="1.20.1260.140">
    <property type="entry name" value="Alternative oxidase"/>
    <property type="match status" value="1"/>
</dbReference>
<dbReference type="InterPro" id="IPR002680">
    <property type="entry name" value="AOX"/>
</dbReference>
<dbReference type="InterPro" id="IPR038659">
    <property type="entry name" value="AOX_sf"/>
</dbReference>
<dbReference type="PANTHER" id="PTHR31803">
    <property type="entry name" value="ALTERNATIVE OXIDASE"/>
    <property type="match status" value="1"/>
</dbReference>
<dbReference type="PANTHER" id="PTHR31803:SF3">
    <property type="entry name" value="ALTERNATIVE OXIDASE"/>
    <property type="match status" value="1"/>
</dbReference>
<dbReference type="Pfam" id="PF01786">
    <property type="entry name" value="AOX"/>
    <property type="match status" value="1"/>
</dbReference>
<dbReference type="PIRSF" id="PIRSF005229">
    <property type="entry name" value="AOX"/>
    <property type="match status" value="1"/>
</dbReference>
<keyword id="KW-0249">Electron transport</keyword>
<keyword id="KW-0408">Iron</keyword>
<keyword id="KW-0472">Membrane</keyword>
<keyword id="KW-0479">Metal-binding</keyword>
<keyword id="KW-0496">Mitochondrion</keyword>
<keyword id="KW-0999">Mitochondrion inner membrane</keyword>
<keyword id="KW-0560">Oxidoreductase</keyword>
<keyword id="KW-0679">Respiratory chain</keyword>
<keyword id="KW-0809">Transit peptide</keyword>
<keyword id="KW-0812">Transmembrane</keyword>
<keyword id="KW-1133">Transmembrane helix</keyword>
<keyword id="KW-0813">Transport</keyword>